<gene>
    <name type="ordered locus">MLBr02584</name>
</gene>
<comment type="similarity">
    <text evidence="1">Belongs to the methyltransferase superfamily.</text>
</comment>
<name>Y2584_MYCLB</name>
<feature type="chain" id="PRO_0000380602" description="Uncharacterized methyltransferase MLBr02584">
    <location>
        <begin position="1"/>
        <end position="269"/>
    </location>
</feature>
<reference key="1">
    <citation type="journal article" date="2009" name="Nat. Genet.">
        <title>Comparative genomic and phylogeographic analysis of Mycobacterium leprae.</title>
        <authorList>
            <person name="Monot M."/>
            <person name="Honore N."/>
            <person name="Garnier T."/>
            <person name="Zidane N."/>
            <person name="Sherafi D."/>
            <person name="Paniz-Mondolfi A."/>
            <person name="Matsuoka M."/>
            <person name="Taylor G.M."/>
            <person name="Donoghue H.D."/>
            <person name="Bouwman A."/>
            <person name="Mays S."/>
            <person name="Watson C."/>
            <person name="Lockwood D."/>
            <person name="Khamispour A."/>
            <person name="Dowlati Y."/>
            <person name="Jianping S."/>
            <person name="Rea T.H."/>
            <person name="Vera-Cabrera L."/>
            <person name="Stefani M.M."/>
            <person name="Banu S."/>
            <person name="Macdonald M."/>
            <person name="Sapkota B.R."/>
            <person name="Spencer J.S."/>
            <person name="Thomas J."/>
            <person name="Harshman K."/>
            <person name="Singh P."/>
            <person name="Busso P."/>
            <person name="Gattiker A."/>
            <person name="Rougemont J."/>
            <person name="Brennan P.J."/>
            <person name="Cole S.T."/>
        </authorList>
    </citation>
    <scope>NUCLEOTIDE SEQUENCE [LARGE SCALE GENOMIC DNA]</scope>
    <source>
        <strain>Br4923</strain>
    </source>
</reference>
<keyword id="KW-0489">Methyltransferase</keyword>
<keyword id="KW-0808">Transferase</keyword>
<accession>B8ZTF7</accession>
<sequence>MDTRRRVWPVAIITPHVTDVFAQRATLTRSLQLLSEFRYEQPYPARFYRALAADTVAMVGDLWLSTHGAPPVGRILLDVGSGSGYFAAAFADAGVRYIGVEPDPREMHAAGPALVPKAGAFVRASGMALPFADDAVDICLSSNVAEHVPQPWQLGNEMLRVTKPGGLVVLSYTIWLGPFGGHEMGLTHYLGGARAATRYVRKHGHRAKNDYGSSLFPVSAADGLNWAASTGVAVAAFPRYHPRWAWWLTSVPVLREFVVSNLVLVLRPR</sequence>
<organism>
    <name type="scientific">Mycobacterium leprae (strain Br4923)</name>
    <dbReference type="NCBI Taxonomy" id="561304"/>
    <lineage>
        <taxon>Bacteria</taxon>
        <taxon>Bacillati</taxon>
        <taxon>Actinomycetota</taxon>
        <taxon>Actinomycetes</taxon>
        <taxon>Mycobacteriales</taxon>
        <taxon>Mycobacteriaceae</taxon>
        <taxon>Mycobacterium</taxon>
    </lineage>
</organism>
<evidence type="ECO:0000305" key="1"/>
<dbReference type="EC" id="2.1.1.-"/>
<dbReference type="EMBL" id="FM211192">
    <property type="protein sequence ID" value="CAR72684.1"/>
    <property type="molecule type" value="Genomic_DNA"/>
</dbReference>
<dbReference type="SMR" id="B8ZTF7"/>
<dbReference type="KEGG" id="mlb:MLBr02584"/>
<dbReference type="HOGENOM" id="CLU_073035_0_0_11"/>
<dbReference type="Proteomes" id="UP000006900">
    <property type="component" value="Chromosome"/>
</dbReference>
<dbReference type="GO" id="GO:0008757">
    <property type="term" value="F:S-adenosylmethionine-dependent methyltransferase activity"/>
    <property type="evidence" value="ECO:0007669"/>
    <property type="project" value="InterPro"/>
</dbReference>
<dbReference type="GO" id="GO:0032259">
    <property type="term" value="P:methylation"/>
    <property type="evidence" value="ECO:0007669"/>
    <property type="project" value="UniProtKB-KW"/>
</dbReference>
<dbReference type="CDD" id="cd02440">
    <property type="entry name" value="AdoMet_MTases"/>
    <property type="match status" value="1"/>
</dbReference>
<dbReference type="Gene3D" id="3.40.50.150">
    <property type="entry name" value="Vaccinia Virus protein VP39"/>
    <property type="match status" value="1"/>
</dbReference>
<dbReference type="InterPro" id="IPR013216">
    <property type="entry name" value="Methyltransf_11"/>
</dbReference>
<dbReference type="InterPro" id="IPR029063">
    <property type="entry name" value="SAM-dependent_MTases_sf"/>
</dbReference>
<dbReference type="PANTHER" id="PTHR43591">
    <property type="entry name" value="METHYLTRANSFERASE"/>
    <property type="match status" value="1"/>
</dbReference>
<dbReference type="Pfam" id="PF08241">
    <property type="entry name" value="Methyltransf_11"/>
    <property type="match status" value="1"/>
</dbReference>
<dbReference type="SUPFAM" id="SSF53335">
    <property type="entry name" value="S-adenosyl-L-methionine-dependent methyltransferases"/>
    <property type="match status" value="1"/>
</dbReference>
<proteinExistence type="inferred from homology"/>
<protein>
    <recommendedName>
        <fullName>Uncharacterized methyltransferase MLBr02584</fullName>
        <ecNumber>2.1.1.-</ecNumber>
    </recommendedName>
</protein>